<name>LIPB_MANSM</name>
<proteinExistence type="inferred from homology"/>
<protein>
    <recommendedName>
        <fullName evidence="1">Octanoyltransferase</fullName>
        <ecNumber evidence="1">2.3.1.181</ecNumber>
    </recommendedName>
    <alternativeName>
        <fullName evidence="1">Lipoate-protein ligase B</fullName>
    </alternativeName>
    <alternativeName>
        <fullName evidence="1">Lipoyl/octanoyl transferase</fullName>
    </alternativeName>
    <alternativeName>
        <fullName evidence="1">Octanoyl-[acyl-carrier-protein]-protein N-octanoyltransferase</fullName>
    </alternativeName>
</protein>
<keyword id="KW-0012">Acyltransferase</keyword>
<keyword id="KW-0963">Cytoplasm</keyword>
<keyword id="KW-0808">Transferase</keyword>
<organism>
    <name type="scientific">Mannheimia succiniciproducens (strain KCTC 0769BP / MBEL55E)</name>
    <dbReference type="NCBI Taxonomy" id="221988"/>
    <lineage>
        <taxon>Bacteria</taxon>
        <taxon>Pseudomonadati</taxon>
        <taxon>Pseudomonadota</taxon>
        <taxon>Gammaproteobacteria</taxon>
        <taxon>Pasteurellales</taxon>
        <taxon>Pasteurellaceae</taxon>
        <taxon>Basfia</taxon>
    </lineage>
</organism>
<feature type="chain" id="PRO_0000062846" description="Octanoyltransferase">
    <location>
        <begin position="1"/>
        <end position="221"/>
    </location>
</feature>
<feature type="domain" description="BPL/LPL catalytic" evidence="2">
    <location>
        <begin position="31"/>
        <end position="213"/>
    </location>
</feature>
<feature type="active site" description="Acyl-thioester intermediate" evidence="1">
    <location>
        <position position="173"/>
    </location>
</feature>
<feature type="binding site" evidence="1">
    <location>
        <begin position="70"/>
        <end position="77"/>
    </location>
    <ligand>
        <name>substrate</name>
    </ligand>
</feature>
<feature type="binding site" evidence="1">
    <location>
        <begin position="142"/>
        <end position="144"/>
    </location>
    <ligand>
        <name>substrate</name>
    </ligand>
</feature>
<feature type="binding site" evidence="1">
    <location>
        <begin position="155"/>
        <end position="157"/>
    </location>
    <ligand>
        <name>substrate</name>
    </ligand>
</feature>
<feature type="site" description="Lowers pKa of active site Cys" evidence="1">
    <location>
        <position position="139"/>
    </location>
</feature>
<evidence type="ECO:0000255" key="1">
    <source>
        <dbReference type="HAMAP-Rule" id="MF_00013"/>
    </source>
</evidence>
<evidence type="ECO:0000255" key="2">
    <source>
        <dbReference type="PROSITE-ProRule" id="PRU01067"/>
    </source>
</evidence>
<evidence type="ECO:0000305" key="3"/>
<gene>
    <name evidence="1" type="primary">lipB</name>
    <name type="ordered locus">MS1827</name>
</gene>
<comment type="function">
    <text evidence="1">Catalyzes the transfer of endogenously produced octanoic acid from octanoyl-acyl-carrier-protein onto the lipoyl domains of lipoate-dependent enzymes. Lipoyl-ACP can also act as a substrate although octanoyl-ACP is likely to be the physiological substrate.</text>
</comment>
<comment type="catalytic activity">
    <reaction evidence="1">
        <text>octanoyl-[ACP] + L-lysyl-[protein] = N(6)-octanoyl-L-lysyl-[protein] + holo-[ACP] + H(+)</text>
        <dbReference type="Rhea" id="RHEA:17665"/>
        <dbReference type="Rhea" id="RHEA-COMP:9636"/>
        <dbReference type="Rhea" id="RHEA-COMP:9685"/>
        <dbReference type="Rhea" id="RHEA-COMP:9752"/>
        <dbReference type="Rhea" id="RHEA-COMP:9928"/>
        <dbReference type="ChEBI" id="CHEBI:15378"/>
        <dbReference type="ChEBI" id="CHEBI:29969"/>
        <dbReference type="ChEBI" id="CHEBI:64479"/>
        <dbReference type="ChEBI" id="CHEBI:78463"/>
        <dbReference type="ChEBI" id="CHEBI:78809"/>
        <dbReference type="EC" id="2.3.1.181"/>
    </reaction>
</comment>
<comment type="pathway">
    <text evidence="1">Protein modification; protein lipoylation via endogenous pathway; protein N(6)-(lipoyl)lysine from octanoyl-[acyl-carrier-protein]: step 1/2.</text>
</comment>
<comment type="subcellular location">
    <subcellularLocation>
        <location evidence="1">Cytoplasm</location>
    </subcellularLocation>
</comment>
<comment type="miscellaneous">
    <text evidence="1">In the reaction, the free carboxyl group of octanoic acid is attached via an amide linkage to the epsilon-amino group of a specific lysine residue of lipoyl domains of lipoate-dependent enzymes.</text>
</comment>
<comment type="similarity">
    <text evidence="1">Belongs to the LipB family.</text>
</comment>
<comment type="sequence caution" evidence="3">
    <conflict type="erroneous initiation">
        <sequence resource="EMBL-CDS" id="AAU38434"/>
    </conflict>
    <text>Extended N-terminus.</text>
</comment>
<sequence>MEQKLIIRQLGIRDYQKTWHEMQEFTDNRTDKSADEIWLVQHPSVFTQGQAGKAEHLLRSTAIPVVQSDRGGQITYHGIGQQIMYVLIDIKRLKTQGRDISVRQLVSALEQSVINTLADYGIESYAKADAPGVYIDGKKICSLGLRIRRGCSFHGLALNINMDLEPFHSINPCGYAGLEMAQLADFVSPQEADCGKVSPKLVEHFVTILGYNKQQIFNIKE</sequence>
<reference key="1">
    <citation type="journal article" date="2004" name="Nat. Biotechnol.">
        <title>The genome sequence of the capnophilic rumen bacterium Mannheimia succiniciproducens.</title>
        <authorList>
            <person name="Hong S.H."/>
            <person name="Kim J.S."/>
            <person name="Lee S.Y."/>
            <person name="In Y.H."/>
            <person name="Choi S.S."/>
            <person name="Rih J.-K."/>
            <person name="Kim C.H."/>
            <person name="Jeong H."/>
            <person name="Hur C.G."/>
            <person name="Kim J.J."/>
        </authorList>
    </citation>
    <scope>NUCLEOTIDE SEQUENCE [LARGE SCALE GENOMIC DNA]</scope>
    <source>
        <strain>KCTC 0769BP / MBEL55E</strain>
    </source>
</reference>
<accession>Q65RH6</accession>
<dbReference type="EC" id="2.3.1.181" evidence="1"/>
<dbReference type="EMBL" id="AE016827">
    <property type="protein sequence ID" value="AAU38434.1"/>
    <property type="status" value="ALT_INIT"/>
    <property type="molecule type" value="Genomic_DNA"/>
</dbReference>
<dbReference type="RefSeq" id="WP_011200990.1">
    <property type="nucleotide sequence ID" value="NC_006300.1"/>
</dbReference>
<dbReference type="SMR" id="Q65RH6"/>
<dbReference type="STRING" id="221988.MS1827"/>
<dbReference type="KEGG" id="msu:MS1827"/>
<dbReference type="eggNOG" id="COG0321">
    <property type="taxonomic scope" value="Bacteria"/>
</dbReference>
<dbReference type="HOGENOM" id="CLU_035168_3_1_6"/>
<dbReference type="OrthoDB" id="9787061at2"/>
<dbReference type="UniPathway" id="UPA00538">
    <property type="reaction ID" value="UER00592"/>
</dbReference>
<dbReference type="Proteomes" id="UP000000607">
    <property type="component" value="Chromosome"/>
</dbReference>
<dbReference type="GO" id="GO:0005737">
    <property type="term" value="C:cytoplasm"/>
    <property type="evidence" value="ECO:0007669"/>
    <property type="project" value="UniProtKB-SubCell"/>
</dbReference>
<dbReference type="GO" id="GO:0033819">
    <property type="term" value="F:lipoyl(octanoyl) transferase activity"/>
    <property type="evidence" value="ECO:0007669"/>
    <property type="project" value="UniProtKB-EC"/>
</dbReference>
<dbReference type="GO" id="GO:0036211">
    <property type="term" value="P:protein modification process"/>
    <property type="evidence" value="ECO:0007669"/>
    <property type="project" value="InterPro"/>
</dbReference>
<dbReference type="CDD" id="cd16444">
    <property type="entry name" value="LipB"/>
    <property type="match status" value="1"/>
</dbReference>
<dbReference type="FunFam" id="3.30.930.10:FF:000020">
    <property type="entry name" value="Octanoyltransferase"/>
    <property type="match status" value="1"/>
</dbReference>
<dbReference type="Gene3D" id="3.30.930.10">
    <property type="entry name" value="Bira Bifunctional Protein, Domain 2"/>
    <property type="match status" value="1"/>
</dbReference>
<dbReference type="HAMAP" id="MF_00013">
    <property type="entry name" value="LipB"/>
    <property type="match status" value="1"/>
</dbReference>
<dbReference type="InterPro" id="IPR045864">
    <property type="entry name" value="aa-tRNA-synth_II/BPL/LPL"/>
</dbReference>
<dbReference type="InterPro" id="IPR004143">
    <property type="entry name" value="BPL_LPL_catalytic"/>
</dbReference>
<dbReference type="InterPro" id="IPR000544">
    <property type="entry name" value="Octanoyltransferase"/>
</dbReference>
<dbReference type="InterPro" id="IPR020605">
    <property type="entry name" value="Octanoyltransferase_CS"/>
</dbReference>
<dbReference type="NCBIfam" id="TIGR00214">
    <property type="entry name" value="lipB"/>
    <property type="match status" value="1"/>
</dbReference>
<dbReference type="NCBIfam" id="NF010922">
    <property type="entry name" value="PRK14342.1"/>
    <property type="match status" value="1"/>
</dbReference>
<dbReference type="PANTHER" id="PTHR10993:SF7">
    <property type="entry name" value="LIPOYLTRANSFERASE 2, MITOCHONDRIAL-RELATED"/>
    <property type="match status" value="1"/>
</dbReference>
<dbReference type="PANTHER" id="PTHR10993">
    <property type="entry name" value="OCTANOYLTRANSFERASE"/>
    <property type="match status" value="1"/>
</dbReference>
<dbReference type="Pfam" id="PF21948">
    <property type="entry name" value="LplA-B_cat"/>
    <property type="match status" value="1"/>
</dbReference>
<dbReference type="PIRSF" id="PIRSF016262">
    <property type="entry name" value="LPLase"/>
    <property type="match status" value="1"/>
</dbReference>
<dbReference type="SUPFAM" id="SSF55681">
    <property type="entry name" value="Class II aaRS and biotin synthetases"/>
    <property type="match status" value="1"/>
</dbReference>
<dbReference type="PROSITE" id="PS51733">
    <property type="entry name" value="BPL_LPL_CATALYTIC"/>
    <property type="match status" value="1"/>
</dbReference>
<dbReference type="PROSITE" id="PS01313">
    <property type="entry name" value="LIPB"/>
    <property type="match status" value="1"/>
</dbReference>